<sequence>MFVDQVKIYVKGGDGGNGMVAYRREKYVPKGGPAGGDGGKGADVVFVVEEGLRTLMDFRYQRHFKADRGQHGMSKGQHGRKAEDLIVKVPPGTVVKDEKTGQILADLVTHGQSAVIARGGRGGRGNSRFATPTNPAPEIAENGEPGQERDVILELKVLADVGLVGFPSVGKSTLLSVVSSARPKIAEYHFTTIVPNLGVVETGDNRSFVMADLPGLIEGAHAGVGLGHQFLRHIERTRVIVHVIDMSGLEGRDPYEDYVTINNELKEYNLRLTERPQVVVANKMDMPDAEENLQAFKEKVGDEVKIFPISAVTKQGVRDLLFEVANLLETTPEFPIHEVADESDTSVMYKLETEGVKFDITRESDGTFVISGYDIEKTFKMTDFSRDESVRRFARQMRGMGIDEALRARGAKDGDIVKILEYEFEFID</sequence>
<gene>
    <name evidence="1" type="primary">obg</name>
    <name type="ordered locus">BCE_4532</name>
</gene>
<accession>Q72ZY5</accession>
<protein>
    <recommendedName>
        <fullName evidence="1">GTPase Obg</fullName>
        <ecNumber evidence="1">3.6.5.-</ecNumber>
    </recommendedName>
    <alternativeName>
        <fullName evidence="1">GTP-binding protein Obg</fullName>
    </alternativeName>
</protein>
<keyword id="KW-0963">Cytoplasm</keyword>
<keyword id="KW-0342">GTP-binding</keyword>
<keyword id="KW-0378">Hydrolase</keyword>
<keyword id="KW-0460">Magnesium</keyword>
<keyword id="KW-0479">Metal-binding</keyword>
<keyword id="KW-0547">Nucleotide-binding</keyword>
<organism>
    <name type="scientific">Bacillus cereus (strain ATCC 10987 / NRS 248)</name>
    <dbReference type="NCBI Taxonomy" id="222523"/>
    <lineage>
        <taxon>Bacteria</taxon>
        <taxon>Bacillati</taxon>
        <taxon>Bacillota</taxon>
        <taxon>Bacilli</taxon>
        <taxon>Bacillales</taxon>
        <taxon>Bacillaceae</taxon>
        <taxon>Bacillus</taxon>
        <taxon>Bacillus cereus group</taxon>
    </lineage>
</organism>
<dbReference type="EC" id="3.6.5.-" evidence="1"/>
<dbReference type="EMBL" id="AE017194">
    <property type="protein sequence ID" value="AAS43433.1"/>
    <property type="molecule type" value="Genomic_DNA"/>
</dbReference>
<dbReference type="SMR" id="Q72ZY5"/>
<dbReference type="KEGG" id="bca:BCE_4532"/>
<dbReference type="HOGENOM" id="CLU_011747_2_1_9"/>
<dbReference type="Proteomes" id="UP000002527">
    <property type="component" value="Chromosome"/>
</dbReference>
<dbReference type="GO" id="GO:0005737">
    <property type="term" value="C:cytoplasm"/>
    <property type="evidence" value="ECO:0007669"/>
    <property type="project" value="UniProtKB-SubCell"/>
</dbReference>
<dbReference type="GO" id="GO:0005525">
    <property type="term" value="F:GTP binding"/>
    <property type="evidence" value="ECO:0007669"/>
    <property type="project" value="UniProtKB-UniRule"/>
</dbReference>
<dbReference type="GO" id="GO:0003924">
    <property type="term" value="F:GTPase activity"/>
    <property type="evidence" value="ECO:0007669"/>
    <property type="project" value="UniProtKB-UniRule"/>
</dbReference>
<dbReference type="GO" id="GO:0000287">
    <property type="term" value="F:magnesium ion binding"/>
    <property type="evidence" value="ECO:0007669"/>
    <property type="project" value="InterPro"/>
</dbReference>
<dbReference type="GO" id="GO:0042254">
    <property type="term" value="P:ribosome biogenesis"/>
    <property type="evidence" value="ECO:0007669"/>
    <property type="project" value="UniProtKB-UniRule"/>
</dbReference>
<dbReference type="CDD" id="cd01898">
    <property type="entry name" value="Obg"/>
    <property type="match status" value="1"/>
</dbReference>
<dbReference type="FunFam" id="2.70.210.12:FF:000001">
    <property type="entry name" value="GTPase Obg"/>
    <property type="match status" value="1"/>
</dbReference>
<dbReference type="FunFam" id="3.40.50.300:FF:000515">
    <property type="entry name" value="GTPase Obg"/>
    <property type="match status" value="1"/>
</dbReference>
<dbReference type="Gene3D" id="3.30.300.350">
    <property type="entry name" value="GTP-binding protein OBG, C-terminal domain"/>
    <property type="match status" value="1"/>
</dbReference>
<dbReference type="Gene3D" id="2.70.210.12">
    <property type="entry name" value="GTP1/OBG domain"/>
    <property type="match status" value="1"/>
</dbReference>
<dbReference type="Gene3D" id="3.40.50.300">
    <property type="entry name" value="P-loop containing nucleotide triphosphate hydrolases"/>
    <property type="match status" value="1"/>
</dbReference>
<dbReference type="HAMAP" id="MF_01454">
    <property type="entry name" value="GTPase_Obg"/>
    <property type="match status" value="1"/>
</dbReference>
<dbReference type="InterPro" id="IPR031167">
    <property type="entry name" value="G_OBG"/>
</dbReference>
<dbReference type="InterPro" id="IPR006073">
    <property type="entry name" value="GTP-bd"/>
</dbReference>
<dbReference type="InterPro" id="IPR014100">
    <property type="entry name" value="GTP-bd_Obg/CgtA"/>
</dbReference>
<dbReference type="InterPro" id="IPR036346">
    <property type="entry name" value="GTP-bd_prot_GTP1/OBG_C_sf"/>
</dbReference>
<dbReference type="InterPro" id="IPR006074">
    <property type="entry name" value="GTP1-OBG_CS"/>
</dbReference>
<dbReference type="InterPro" id="IPR006169">
    <property type="entry name" value="GTP1_OBG_dom"/>
</dbReference>
<dbReference type="InterPro" id="IPR036726">
    <property type="entry name" value="GTP1_OBG_dom_sf"/>
</dbReference>
<dbReference type="InterPro" id="IPR045086">
    <property type="entry name" value="OBG_GTPase"/>
</dbReference>
<dbReference type="InterPro" id="IPR015349">
    <property type="entry name" value="OCT_dom"/>
</dbReference>
<dbReference type="InterPro" id="IPR027417">
    <property type="entry name" value="P-loop_NTPase"/>
</dbReference>
<dbReference type="InterPro" id="IPR005225">
    <property type="entry name" value="Small_GTP-bd"/>
</dbReference>
<dbReference type="NCBIfam" id="TIGR02729">
    <property type="entry name" value="Obg_CgtA"/>
    <property type="match status" value="1"/>
</dbReference>
<dbReference type="NCBIfam" id="TIGR03595">
    <property type="entry name" value="Obg_CgtA_exten"/>
    <property type="match status" value="1"/>
</dbReference>
<dbReference type="NCBIfam" id="NF008954">
    <property type="entry name" value="PRK12296.1"/>
    <property type="match status" value="1"/>
</dbReference>
<dbReference type="NCBIfam" id="NF008955">
    <property type="entry name" value="PRK12297.1"/>
    <property type="match status" value="1"/>
</dbReference>
<dbReference type="NCBIfam" id="NF008956">
    <property type="entry name" value="PRK12299.1"/>
    <property type="match status" value="1"/>
</dbReference>
<dbReference type="NCBIfam" id="TIGR00231">
    <property type="entry name" value="small_GTP"/>
    <property type="match status" value="1"/>
</dbReference>
<dbReference type="PANTHER" id="PTHR11702">
    <property type="entry name" value="DEVELOPMENTALLY REGULATED GTP-BINDING PROTEIN-RELATED"/>
    <property type="match status" value="1"/>
</dbReference>
<dbReference type="PANTHER" id="PTHR11702:SF31">
    <property type="entry name" value="MITOCHONDRIAL RIBOSOME-ASSOCIATED GTPASE 2"/>
    <property type="match status" value="1"/>
</dbReference>
<dbReference type="Pfam" id="PF09269">
    <property type="entry name" value="DUF1967"/>
    <property type="match status" value="1"/>
</dbReference>
<dbReference type="Pfam" id="PF01018">
    <property type="entry name" value="GTP1_OBG"/>
    <property type="match status" value="1"/>
</dbReference>
<dbReference type="Pfam" id="PF01926">
    <property type="entry name" value="MMR_HSR1"/>
    <property type="match status" value="1"/>
</dbReference>
<dbReference type="PIRSF" id="PIRSF002401">
    <property type="entry name" value="GTP_bd_Obg/CgtA"/>
    <property type="match status" value="1"/>
</dbReference>
<dbReference type="PRINTS" id="PR00326">
    <property type="entry name" value="GTP1OBG"/>
</dbReference>
<dbReference type="SUPFAM" id="SSF102741">
    <property type="entry name" value="Obg GTP-binding protein C-terminal domain"/>
    <property type="match status" value="1"/>
</dbReference>
<dbReference type="SUPFAM" id="SSF82051">
    <property type="entry name" value="Obg GTP-binding protein N-terminal domain"/>
    <property type="match status" value="1"/>
</dbReference>
<dbReference type="SUPFAM" id="SSF52540">
    <property type="entry name" value="P-loop containing nucleoside triphosphate hydrolases"/>
    <property type="match status" value="1"/>
</dbReference>
<dbReference type="PROSITE" id="PS51710">
    <property type="entry name" value="G_OBG"/>
    <property type="match status" value="1"/>
</dbReference>
<dbReference type="PROSITE" id="PS00905">
    <property type="entry name" value="GTP1_OBG"/>
    <property type="match status" value="1"/>
</dbReference>
<dbReference type="PROSITE" id="PS51883">
    <property type="entry name" value="OBG"/>
    <property type="match status" value="1"/>
</dbReference>
<dbReference type="PROSITE" id="PS51881">
    <property type="entry name" value="OCT"/>
    <property type="match status" value="1"/>
</dbReference>
<reference key="1">
    <citation type="journal article" date="2004" name="Nucleic Acids Res.">
        <title>The genome sequence of Bacillus cereus ATCC 10987 reveals metabolic adaptations and a large plasmid related to Bacillus anthracis pXO1.</title>
        <authorList>
            <person name="Rasko D.A."/>
            <person name="Ravel J."/>
            <person name="Oekstad O.A."/>
            <person name="Helgason E."/>
            <person name="Cer R.Z."/>
            <person name="Jiang L."/>
            <person name="Shores K.A."/>
            <person name="Fouts D.E."/>
            <person name="Tourasse N.J."/>
            <person name="Angiuoli S.V."/>
            <person name="Kolonay J.F."/>
            <person name="Nelson W.C."/>
            <person name="Kolstoe A.-B."/>
            <person name="Fraser C.M."/>
            <person name="Read T.D."/>
        </authorList>
    </citation>
    <scope>NUCLEOTIDE SEQUENCE [LARGE SCALE GENOMIC DNA]</scope>
    <source>
        <strain>ATCC 10987 / NRS 248</strain>
    </source>
</reference>
<comment type="function">
    <text evidence="1">An essential GTPase which binds GTP, GDP and possibly (p)ppGpp with moderate affinity, with high nucleotide exchange rates and a fairly low GTP hydrolysis rate. Plays a role in control of the cell cycle, stress response, ribosome biogenesis and in those bacteria that undergo differentiation, in morphogenesis control.</text>
</comment>
<comment type="cofactor">
    <cofactor evidence="1">
        <name>Mg(2+)</name>
        <dbReference type="ChEBI" id="CHEBI:18420"/>
    </cofactor>
</comment>
<comment type="subunit">
    <text evidence="1">Monomer.</text>
</comment>
<comment type="subcellular location">
    <subcellularLocation>
        <location evidence="1">Cytoplasm</location>
    </subcellularLocation>
</comment>
<comment type="similarity">
    <text evidence="1">Belongs to the TRAFAC class OBG-HflX-like GTPase superfamily. OBG GTPase family.</text>
</comment>
<evidence type="ECO:0000255" key="1">
    <source>
        <dbReference type="HAMAP-Rule" id="MF_01454"/>
    </source>
</evidence>
<evidence type="ECO:0000255" key="2">
    <source>
        <dbReference type="PROSITE-ProRule" id="PRU01229"/>
    </source>
</evidence>
<evidence type="ECO:0000255" key="3">
    <source>
        <dbReference type="PROSITE-ProRule" id="PRU01231"/>
    </source>
</evidence>
<evidence type="ECO:0000256" key="4">
    <source>
        <dbReference type="SAM" id="MobiDB-lite"/>
    </source>
</evidence>
<feature type="chain" id="PRO_0000385718" description="GTPase Obg">
    <location>
        <begin position="1"/>
        <end position="428"/>
    </location>
</feature>
<feature type="domain" description="Obg" evidence="3">
    <location>
        <begin position="1"/>
        <end position="158"/>
    </location>
</feature>
<feature type="domain" description="OBG-type G" evidence="1">
    <location>
        <begin position="159"/>
        <end position="329"/>
    </location>
</feature>
<feature type="domain" description="OCT" evidence="2">
    <location>
        <begin position="350"/>
        <end position="428"/>
    </location>
</feature>
<feature type="region of interest" description="Disordered" evidence="4">
    <location>
        <begin position="117"/>
        <end position="145"/>
    </location>
</feature>
<feature type="binding site" evidence="1">
    <location>
        <begin position="165"/>
        <end position="172"/>
    </location>
    <ligand>
        <name>GTP</name>
        <dbReference type="ChEBI" id="CHEBI:37565"/>
    </ligand>
</feature>
<feature type="binding site" evidence="1">
    <location>
        <position position="172"/>
    </location>
    <ligand>
        <name>Mg(2+)</name>
        <dbReference type="ChEBI" id="CHEBI:18420"/>
    </ligand>
</feature>
<feature type="binding site" evidence="1">
    <location>
        <begin position="190"/>
        <end position="194"/>
    </location>
    <ligand>
        <name>GTP</name>
        <dbReference type="ChEBI" id="CHEBI:37565"/>
    </ligand>
</feature>
<feature type="binding site" evidence="1">
    <location>
        <position position="192"/>
    </location>
    <ligand>
        <name>Mg(2+)</name>
        <dbReference type="ChEBI" id="CHEBI:18420"/>
    </ligand>
</feature>
<feature type="binding site" evidence="1">
    <location>
        <begin position="212"/>
        <end position="215"/>
    </location>
    <ligand>
        <name>GTP</name>
        <dbReference type="ChEBI" id="CHEBI:37565"/>
    </ligand>
</feature>
<feature type="binding site" evidence="1">
    <location>
        <begin position="282"/>
        <end position="285"/>
    </location>
    <ligand>
        <name>GTP</name>
        <dbReference type="ChEBI" id="CHEBI:37565"/>
    </ligand>
</feature>
<feature type="binding site" evidence="1">
    <location>
        <begin position="310"/>
        <end position="312"/>
    </location>
    <ligand>
        <name>GTP</name>
        <dbReference type="ChEBI" id="CHEBI:37565"/>
    </ligand>
</feature>
<proteinExistence type="inferred from homology"/>
<name>OBG_BACC1</name>